<keyword id="KW-1003">Cell membrane</keyword>
<keyword id="KW-0472">Membrane</keyword>
<keyword id="KW-0614">Plasmid</keyword>
<keyword id="KW-1185">Reference proteome</keyword>
<keyword id="KW-0812">Transmembrane</keyword>
<keyword id="KW-1133">Transmembrane helix</keyword>
<proteinExistence type="predicted"/>
<gene>
    <name type="ordered locus">BpOF4_21034</name>
</gene>
<feature type="chain" id="PRO_0000066242" description="Uncharacterized protein BpOF4_21034">
    <location>
        <begin position="1"/>
        <end position="55"/>
    </location>
</feature>
<feature type="transmembrane region" description="Helical" evidence="1">
    <location>
        <begin position="2"/>
        <end position="19"/>
    </location>
</feature>
<feature type="transmembrane region" description="Helical" evidence="1">
    <location>
        <begin position="24"/>
        <end position="46"/>
    </location>
</feature>
<feature type="sequence conflict" description="In Ref. 1; AAB05372." evidence="2" ref="1">
    <original>KNAISNN</original>
    <variation>GKMQLVIIKLFLVLTGAFL</variation>
    <location>
        <begin position="49"/>
        <end position="55"/>
    </location>
</feature>
<name>Y4206_ALKPO</name>
<reference key="1">
    <citation type="journal article" date="1996" name="J. Bacteriol.">
        <title>Purification of a cytochrome bd terminal oxidase encoded by the Escherichia coli app locus from a delta cyo delta cyd strain complemented by genes from Bacillus firmus OF4.</title>
        <authorList>
            <person name="Sturr M.G."/>
            <person name="Krulwich T.A."/>
            <person name="Hicks D.B."/>
        </authorList>
    </citation>
    <scope>NUCLEOTIDE SEQUENCE [GENOMIC DNA]</scope>
</reference>
<reference key="2">
    <citation type="journal article" date="2011" name="Environ. Microbiol.">
        <title>Genome of alkaliphilic Bacillus pseudofirmus OF4 reveals adaptations that support the ability to grow in an external pH range from 7.5 to 11.4.</title>
        <authorList>
            <person name="Janto B."/>
            <person name="Ahmed A."/>
            <person name="Ito M."/>
            <person name="Liu J."/>
            <person name="Hicks D.B."/>
            <person name="Pagni S."/>
            <person name="Fackelmayer O.J."/>
            <person name="Smith T.A."/>
            <person name="Earl J."/>
            <person name="Elbourne L.D."/>
            <person name="Hassan K."/>
            <person name="Paulsen I.T."/>
            <person name="Kolsto A.B."/>
            <person name="Tourasse N.J."/>
            <person name="Ehrlich G.D."/>
            <person name="Boissy R."/>
            <person name="Ivey D.M."/>
            <person name="Li G."/>
            <person name="Xue Y."/>
            <person name="Ma Y."/>
            <person name="Hu F.Z."/>
            <person name="Krulwich T.A."/>
        </authorList>
    </citation>
    <scope>NUCLEOTIDE SEQUENCE [LARGE SCALE GENOMIC DNA]</scope>
    <source>
        <strain>ATCC BAA-2126 / JCM 17055 / OF4</strain>
        <plasmid>pBpOF4-01</plasmid>
    </source>
</reference>
<sequence length="55" mass="6221">MVIGLFVLSIVMLIVSFIAQSFTLLSIMISFLLFTSAVVLAMFRYFRKKNAISNN</sequence>
<accession>Q45132</accession>
<accession>D3G1H6</accession>
<evidence type="ECO:0000255" key="1"/>
<evidence type="ECO:0000305" key="2"/>
<protein>
    <recommendedName>
        <fullName>Uncharacterized protein BpOF4_21034</fullName>
    </recommendedName>
</protein>
<comment type="subcellular location">
    <subcellularLocation>
        <location evidence="2">Cell membrane</location>
        <topology evidence="2">Multi-pass membrane protein</topology>
    </subcellularLocation>
</comment>
<comment type="sequence caution" evidence="2">
    <conflict type="erroneous initiation">
        <sequence resource="EMBL-CDS" id="AAB05372"/>
    </conflict>
    <text>Extended N-terminus.</text>
</comment>
<organism>
    <name type="scientific">Alkalihalophilus pseudofirmus (strain ATCC BAA-2126 / JCM 17055 / OF4)</name>
    <name type="common">Bacillus pseudofirmus</name>
    <dbReference type="NCBI Taxonomy" id="398511"/>
    <lineage>
        <taxon>Bacteria</taxon>
        <taxon>Bacillati</taxon>
        <taxon>Bacillota</taxon>
        <taxon>Bacilli</taxon>
        <taxon>Bacillales</taxon>
        <taxon>Bacillaceae</taxon>
        <taxon>Alkalihalophilus</taxon>
    </lineage>
</organism>
<geneLocation type="plasmid">
    <name>pBpOF4-01</name>
</geneLocation>
<dbReference type="EMBL" id="U39410">
    <property type="protein sequence ID" value="AAB05372.1"/>
    <property type="status" value="ALT_INIT"/>
    <property type="molecule type" value="Genomic_DNA"/>
</dbReference>
<dbReference type="EMBL" id="CP001879">
    <property type="protein sequence ID" value="ADC52202.1"/>
    <property type="molecule type" value="Genomic_DNA"/>
</dbReference>
<dbReference type="RefSeq" id="WP_012961111.1">
    <property type="nucleotide sequence ID" value="NC_013792.1"/>
</dbReference>
<dbReference type="KEGG" id="bpf:BpOF4_21034"/>
<dbReference type="HOGENOM" id="CLU_3022468_0_0_9"/>
<dbReference type="Proteomes" id="UP000001544">
    <property type="component" value="Plasmid pBpOF4-01"/>
</dbReference>
<dbReference type="GO" id="GO:0005886">
    <property type="term" value="C:plasma membrane"/>
    <property type="evidence" value="ECO:0007669"/>
    <property type="project" value="UniProtKB-SubCell"/>
</dbReference>